<proteinExistence type="evidence at protein level"/>
<sequence>MGTKFPKASQALAQDPTTRRIWYGIATANDFETNDGITEENLYQKIFASHFGHLAIIFLWTSGNLFHVAWQGNFEQWVKDPLNTRPIAHAISDPHFGQRAIEAFSQAGASSPVNISYSGVYQWWYTQGMRTNEELYNGAIFLLILSALSLFAGWLHLQPKFRPNLSWFKNAESRLNHHLGGLFGTSSLAWTGHIVHVAIPESRGQHVGWDNFLQVAPHPAGLQPFFTGNWGVYTENPDTANHVFGSSDGAGTAILTFLGGFHPQTQSLWLTDIAHHHLAIAVLFIVAGHMYRTNFGIGHSIKEILNGHRPPGGRLGAGHVGLYDTVNNSLHFQLGLALAALGVITSLVAQHMYSIPPYAYLARDFTTQAALYTHHQYIAGFLMVGAFAHGAIFLVRDYDAEQNKNNVLARIIDHKEAIISHLSWVSLFLGFHTLGLYVHNDVVQAFGTPEKQILIEPVFAQWIQSVHGKSLYGFEVLLNNADSITRVAPGSAQPIWLPGWLDAINSGNNSLFLTIGPGDFLVHHAIALGLHTTTLILVKGALDARGSKLMPDKKDFGYSFPCDGPGRGGTCDISAWDAFYLAVFWMLNTIGWTTFYWHWKHLGVWQGNVAQFNESSTYLMGWFRDYLWLNSSQLINGYNPFGMNNLSVWAWMFLFGHLIWATGFMFLISWRGYWQELIETLVWAHERTPLANLVRWKDKPVALSIVQARLVGLAHFAVGYIVTYAAFLIASTASKFG</sequence>
<name>PSAB_CYAPA</name>
<geneLocation type="cyanelle"/>
<comment type="function">
    <text evidence="1">PsaA and PsaB bind P700, the primary electron donor of photosystem I (PSI), as well as the electron acceptors A0, A1 and FX. PSI is a cytochrome c6-ferredoxin oxidoreductase, converting photonic excitation into a charge separation, which transfers an electron from the donor P700 chlorophyll pair to the spectroscopically characterized acceptors A0, A1, FX, FA and FB in turn. Oxidized P700 is reduced on the lumenal side of the thylakoid membrane by cytochrome c6 (By similarity).</text>
</comment>
<comment type="catalytic activity">
    <reaction evidence="2">
        <text>reduced [plastocyanin] + hnu + oxidized [2Fe-2S]-[ferredoxin] = oxidized [plastocyanin] + reduced [2Fe-2S]-[ferredoxin]</text>
        <dbReference type="Rhea" id="RHEA:30407"/>
        <dbReference type="Rhea" id="RHEA-COMP:10000"/>
        <dbReference type="Rhea" id="RHEA-COMP:10001"/>
        <dbReference type="Rhea" id="RHEA-COMP:10039"/>
        <dbReference type="Rhea" id="RHEA-COMP:10040"/>
        <dbReference type="ChEBI" id="CHEBI:29036"/>
        <dbReference type="ChEBI" id="CHEBI:30212"/>
        <dbReference type="ChEBI" id="CHEBI:33737"/>
        <dbReference type="ChEBI" id="CHEBI:33738"/>
        <dbReference type="ChEBI" id="CHEBI:49552"/>
        <dbReference type="EC" id="1.97.1.12"/>
    </reaction>
</comment>
<comment type="cofactor">
    <text evidence="2">P700 is a chlorophyll a/chlorophyll a' dimer, A0 is one or more chlorophyll a, A1 is one or both phylloquinones and FX is a shared 4Fe-4S iron-sulfur center.</text>
</comment>
<comment type="subunit">
    <text evidence="2">The PsaA/B heterodimer binds the P700 chlorophyll special pair and subsequent electron acceptors. PSI consists of a core antenna complex that captures photons, and an electron transfer chain that converts photonic excitation into a charge separation. The eukaryotic PSI reaction center is composed of at least 11 subunits.</text>
</comment>
<comment type="subcellular location">
    <subcellularLocation>
        <location evidence="1">Plastid</location>
        <location evidence="1">Cyanelle thylakoid membrane</location>
        <topology evidence="2">Multi-pass membrane protein</topology>
    </subcellularLocation>
</comment>
<comment type="similarity">
    <text evidence="2">Belongs to the PsaA/PsaB family.</text>
</comment>
<protein>
    <recommendedName>
        <fullName evidence="2">Photosystem I P700 chlorophyll a apoprotein A2</fullName>
        <ecNumber evidence="2">1.97.1.12</ecNumber>
    </recommendedName>
    <alternativeName>
        <fullName evidence="2">PsaB</fullName>
    </alternativeName>
</protein>
<feature type="chain" id="PRO_0000088613" description="Photosystem I P700 chlorophyll a apoprotein A2">
    <location>
        <begin position="1"/>
        <end position="737"/>
    </location>
</feature>
<feature type="transmembrane region" description="Helical; Name=I" evidence="2">
    <location>
        <begin position="46"/>
        <end position="69"/>
    </location>
</feature>
<feature type="transmembrane region" description="Helical; Name=II" evidence="2">
    <location>
        <begin position="135"/>
        <end position="158"/>
    </location>
</feature>
<feature type="transmembrane region" description="Helical; Name=III" evidence="2">
    <location>
        <begin position="175"/>
        <end position="199"/>
    </location>
</feature>
<feature type="transmembrane region" description="Helical; Name=IV" evidence="2">
    <location>
        <begin position="273"/>
        <end position="291"/>
    </location>
</feature>
<feature type="transmembrane region" description="Helical; Name=V" evidence="2">
    <location>
        <begin position="330"/>
        <end position="353"/>
    </location>
</feature>
<feature type="transmembrane region" description="Helical; Name=VI" evidence="2">
    <location>
        <begin position="369"/>
        <end position="395"/>
    </location>
</feature>
<feature type="transmembrane region" description="Helical; Name=VII" evidence="2">
    <location>
        <begin position="417"/>
        <end position="439"/>
    </location>
</feature>
<feature type="transmembrane region" description="Helical; Name=VIII" evidence="2">
    <location>
        <begin position="520"/>
        <end position="538"/>
    </location>
</feature>
<feature type="transmembrane region" description="Helical; Name=IX" evidence="2">
    <location>
        <begin position="578"/>
        <end position="599"/>
    </location>
</feature>
<feature type="transmembrane region" description="Helical; Name=X" evidence="2">
    <location>
        <begin position="646"/>
        <end position="668"/>
    </location>
</feature>
<feature type="transmembrane region" description="Helical; Name=XI" evidence="2">
    <location>
        <begin position="710"/>
        <end position="730"/>
    </location>
</feature>
<feature type="binding site" evidence="2">
    <location>
        <position position="562"/>
    </location>
    <ligand>
        <name>[4Fe-4S] cluster</name>
        <dbReference type="ChEBI" id="CHEBI:49883"/>
        <note>ligand shared between dimeric partners</note>
    </ligand>
</feature>
<feature type="binding site" evidence="2">
    <location>
        <position position="571"/>
    </location>
    <ligand>
        <name>[4Fe-4S] cluster</name>
        <dbReference type="ChEBI" id="CHEBI:49883"/>
        <note>ligand shared between dimeric partners</note>
    </ligand>
</feature>
<feature type="binding site" description="axial binding residue" evidence="2">
    <location>
        <position position="657"/>
    </location>
    <ligand>
        <name>chlorophyll a</name>
        <dbReference type="ChEBI" id="CHEBI:58416"/>
        <label>B1</label>
    </ligand>
    <ligandPart>
        <name>Mg</name>
        <dbReference type="ChEBI" id="CHEBI:25107"/>
    </ligandPart>
</feature>
<feature type="binding site" description="axial binding residue" evidence="2">
    <location>
        <position position="665"/>
    </location>
    <ligand>
        <name>chlorophyll a</name>
        <dbReference type="ChEBI" id="CHEBI:58416"/>
        <label>B3</label>
    </ligand>
    <ligandPart>
        <name>Mg</name>
        <dbReference type="ChEBI" id="CHEBI:25107"/>
    </ligandPart>
</feature>
<feature type="binding site" evidence="2">
    <location>
        <position position="673"/>
    </location>
    <ligand>
        <name>chlorophyll a</name>
        <dbReference type="ChEBI" id="CHEBI:58416"/>
        <label>B3</label>
    </ligand>
</feature>
<feature type="binding site" evidence="2">
    <location>
        <position position="674"/>
    </location>
    <ligand>
        <name>phylloquinone</name>
        <dbReference type="ChEBI" id="CHEBI:18067"/>
        <label>B</label>
    </ligand>
</feature>
<feature type="helix" evidence="4">
    <location>
        <begin position="10"/>
        <end position="13"/>
    </location>
</feature>
<feature type="helix" evidence="4">
    <location>
        <begin position="19"/>
        <end position="26"/>
    </location>
</feature>
<feature type="helix" evidence="4">
    <location>
        <begin position="31"/>
        <end position="33"/>
    </location>
</feature>
<feature type="helix" evidence="4">
    <location>
        <begin position="39"/>
        <end position="71"/>
    </location>
</feature>
<feature type="helix" evidence="4">
    <location>
        <begin position="74"/>
        <end position="79"/>
    </location>
</feature>
<feature type="turn" evidence="4">
    <location>
        <begin position="81"/>
        <end position="83"/>
    </location>
</feature>
<feature type="strand" evidence="4">
    <location>
        <begin position="87"/>
        <end position="90"/>
    </location>
</feature>
<feature type="helix" evidence="4">
    <location>
        <begin position="98"/>
        <end position="104"/>
    </location>
</feature>
<feature type="strand" evidence="4">
    <location>
        <begin position="113"/>
        <end position="115"/>
    </location>
</feature>
<feature type="helix" evidence="4">
    <location>
        <begin position="120"/>
        <end position="126"/>
    </location>
</feature>
<feature type="helix" evidence="4">
    <location>
        <begin position="132"/>
        <end position="155"/>
    </location>
</feature>
<feature type="helix" evidence="4">
    <location>
        <begin position="159"/>
        <end position="161"/>
    </location>
</feature>
<feature type="helix" evidence="4">
    <location>
        <begin position="165"/>
        <end position="168"/>
    </location>
</feature>
<feature type="helix" evidence="4">
    <location>
        <begin position="171"/>
        <end position="180"/>
    </location>
</feature>
<feature type="turn" evidence="4">
    <location>
        <begin position="181"/>
        <end position="183"/>
    </location>
</feature>
<feature type="helix" evidence="4">
    <location>
        <begin position="184"/>
        <end position="196"/>
    </location>
</feature>
<feature type="helix" evidence="4">
    <location>
        <begin position="198"/>
        <end position="202"/>
    </location>
</feature>
<feature type="turn" evidence="4">
    <location>
        <begin position="209"/>
        <end position="214"/>
    </location>
</feature>
<feature type="turn" evidence="3">
    <location>
        <begin position="219"/>
        <end position="222"/>
    </location>
</feature>
<feature type="helix" evidence="4">
    <location>
        <begin position="223"/>
        <end position="226"/>
    </location>
</feature>
<feature type="helix" evidence="4">
    <location>
        <begin position="230"/>
        <end position="234"/>
    </location>
</feature>
<feature type="turn" evidence="4">
    <location>
        <begin position="263"/>
        <end position="266"/>
    </location>
</feature>
<feature type="helix" evidence="4">
    <location>
        <begin position="270"/>
        <end position="287"/>
    </location>
</feature>
<feature type="helix" evidence="4">
    <location>
        <begin position="322"/>
        <end position="328"/>
    </location>
</feature>
<feature type="helix" evidence="4">
    <location>
        <begin position="330"/>
        <end position="354"/>
    </location>
</feature>
<feature type="turn" evidence="4">
    <location>
        <begin position="359"/>
        <end position="363"/>
    </location>
</feature>
<feature type="helix" evidence="4">
    <location>
        <begin position="365"/>
        <end position="396"/>
    </location>
</feature>
<feature type="strand" evidence="4">
    <location>
        <begin position="400"/>
        <end position="402"/>
    </location>
</feature>
<feature type="helix" evidence="4">
    <location>
        <begin position="407"/>
        <end position="411"/>
    </location>
</feature>
<feature type="turn" evidence="4">
    <location>
        <begin position="412"/>
        <end position="414"/>
    </location>
</feature>
<feature type="helix" evidence="4">
    <location>
        <begin position="415"/>
        <end position="445"/>
    </location>
</feature>
<feature type="helix" evidence="4">
    <location>
        <begin position="449"/>
        <end position="451"/>
    </location>
</feature>
<feature type="helix" evidence="4">
    <location>
        <begin position="458"/>
        <end position="466"/>
    </location>
</feature>
<feature type="strand" evidence="4">
    <location>
        <begin position="477"/>
        <end position="480"/>
    </location>
</feature>
<feature type="helix" evidence="4">
    <location>
        <begin position="484"/>
        <end position="487"/>
    </location>
</feature>
<feature type="turn" evidence="4">
    <location>
        <begin position="489"/>
        <end position="491"/>
    </location>
</feature>
<feature type="helix" evidence="4">
    <location>
        <begin position="497"/>
        <end position="505"/>
    </location>
</feature>
<feature type="helix" evidence="4">
    <location>
        <begin position="517"/>
        <end position="542"/>
    </location>
</feature>
<feature type="helix" evidence="4">
    <location>
        <begin position="553"/>
        <end position="556"/>
    </location>
</feature>
<feature type="helix" evidence="4">
    <location>
        <begin position="575"/>
        <end position="606"/>
    </location>
</feature>
<feature type="helix" evidence="4">
    <location>
        <begin position="610"/>
        <end position="615"/>
    </location>
</feature>
<feature type="helix" evidence="4">
    <location>
        <begin position="619"/>
        <end position="624"/>
    </location>
</feature>
<feature type="helix" evidence="4">
    <location>
        <begin position="627"/>
        <end position="630"/>
    </location>
</feature>
<feature type="turn" evidence="4">
    <location>
        <begin position="631"/>
        <end position="633"/>
    </location>
</feature>
<feature type="helix" evidence="4">
    <location>
        <begin position="634"/>
        <end position="636"/>
    </location>
</feature>
<feature type="strand" evidence="4">
    <location>
        <begin position="637"/>
        <end position="639"/>
    </location>
</feature>
<feature type="helix" evidence="4">
    <location>
        <begin position="647"/>
        <end position="668"/>
    </location>
</feature>
<feature type="helix" evidence="4">
    <location>
        <begin position="671"/>
        <end position="686"/>
    </location>
</feature>
<feature type="turn" evidence="4">
    <location>
        <begin position="689"/>
        <end position="693"/>
    </location>
</feature>
<feature type="strand" evidence="4">
    <location>
        <begin position="697"/>
        <end position="699"/>
    </location>
</feature>
<feature type="helix" evidence="4">
    <location>
        <begin position="705"/>
        <end position="735"/>
    </location>
</feature>
<organism>
    <name type="scientific">Cyanophora paradoxa</name>
    <dbReference type="NCBI Taxonomy" id="2762"/>
    <lineage>
        <taxon>Eukaryota</taxon>
        <taxon>Glaucocystophyceae</taxon>
        <taxon>Cyanophoraceae</taxon>
        <taxon>Cyanophora</taxon>
    </lineage>
</organism>
<gene>
    <name evidence="2" type="primary">psaB</name>
</gene>
<keyword id="KW-0002">3D-structure</keyword>
<keyword id="KW-0004">4Fe-4S</keyword>
<keyword id="KW-0148">Chlorophyll</keyword>
<keyword id="KW-0157">Chromophore</keyword>
<keyword id="KW-0194">Cyanelle</keyword>
<keyword id="KW-0249">Electron transport</keyword>
<keyword id="KW-0408">Iron</keyword>
<keyword id="KW-0411">Iron-sulfur</keyword>
<keyword id="KW-0460">Magnesium</keyword>
<keyword id="KW-0472">Membrane</keyword>
<keyword id="KW-0479">Metal-binding</keyword>
<keyword id="KW-0560">Oxidoreductase</keyword>
<keyword id="KW-0602">Photosynthesis</keyword>
<keyword id="KW-0603">Photosystem I</keyword>
<keyword id="KW-0934">Plastid</keyword>
<keyword id="KW-0793">Thylakoid</keyword>
<keyword id="KW-0812">Transmembrane</keyword>
<keyword id="KW-1133">Transmembrane helix</keyword>
<keyword id="KW-0813">Transport</keyword>
<dbReference type="EC" id="1.97.1.12" evidence="2"/>
<dbReference type="EMBL" id="U30821">
    <property type="protein sequence ID" value="AAA81182.1"/>
    <property type="molecule type" value="Genomic_DNA"/>
</dbReference>
<dbReference type="PIR" id="T06839">
    <property type="entry name" value="T06839"/>
</dbReference>
<dbReference type="RefSeq" id="NP_043151.1">
    <property type="nucleotide sequence ID" value="NC_001675.1"/>
</dbReference>
<dbReference type="PDB" id="7DR0">
    <property type="method" value="EM"/>
    <property type="resolution" value="3.30 A"/>
    <property type="chains" value="B=1-737"/>
</dbReference>
<dbReference type="PDB" id="7DR1">
    <property type="method" value="EM"/>
    <property type="resolution" value="3.20 A"/>
    <property type="chains" value="B=1-737"/>
</dbReference>
<dbReference type="PDB" id="7DR2">
    <property type="method" value="EM"/>
    <property type="resolution" value="3.80 A"/>
    <property type="chains" value="aB/bB/cB/dB=1-737"/>
</dbReference>
<dbReference type="PDBsum" id="7DR0"/>
<dbReference type="PDBsum" id="7DR1"/>
<dbReference type="PDBsum" id="7DR2"/>
<dbReference type="EMDB" id="EMD-30820"/>
<dbReference type="EMDB" id="EMD-30821"/>
<dbReference type="EMDB" id="EMD-30823"/>
<dbReference type="SMR" id="P48113"/>
<dbReference type="GeneID" id="801522"/>
<dbReference type="GO" id="GO:0009535">
    <property type="term" value="C:chloroplast thylakoid membrane"/>
    <property type="evidence" value="ECO:0007669"/>
    <property type="project" value="TreeGrafter"/>
</dbReference>
<dbReference type="GO" id="GO:0033115">
    <property type="term" value="C:cyanelle thylakoid membrane"/>
    <property type="evidence" value="ECO:0007669"/>
    <property type="project" value="UniProtKB-SubCell"/>
</dbReference>
<dbReference type="GO" id="GO:0009522">
    <property type="term" value="C:photosystem I"/>
    <property type="evidence" value="ECO:0007669"/>
    <property type="project" value="UniProtKB-KW"/>
</dbReference>
<dbReference type="GO" id="GO:0051539">
    <property type="term" value="F:4 iron, 4 sulfur cluster binding"/>
    <property type="evidence" value="ECO:0007669"/>
    <property type="project" value="UniProtKB-KW"/>
</dbReference>
<dbReference type="GO" id="GO:0016168">
    <property type="term" value="F:chlorophyll binding"/>
    <property type="evidence" value="ECO:0007669"/>
    <property type="project" value="UniProtKB-KW"/>
</dbReference>
<dbReference type="GO" id="GO:0009055">
    <property type="term" value="F:electron transfer activity"/>
    <property type="evidence" value="ECO:0007669"/>
    <property type="project" value="UniProtKB-UniRule"/>
</dbReference>
<dbReference type="GO" id="GO:0000287">
    <property type="term" value="F:magnesium ion binding"/>
    <property type="evidence" value="ECO:0007669"/>
    <property type="project" value="UniProtKB-UniRule"/>
</dbReference>
<dbReference type="GO" id="GO:0016491">
    <property type="term" value="F:oxidoreductase activity"/>
    <property type="evidence" value="ECO:0007669"/>
    <property type="project" value="UniProtKB-KW"/>
</dbReference>
<dbReference type="GO" id="GO:0015979">
    <property type="term" value="P:photosynthesis"/>
    <property type="evidence" value="ECO:0007669"/>
    <property type="project" value="UniProtKB-UniRule"/>
</dbReference>
<dbReference type="FunFam" id="1.20.1130.10:FF:000001">
    <property type="entry name" value="Photosystem I P700 chlorophyll a apoprotein A2"/>
    <property type="match status" value="1"/>
</dbReference>
<dbReference type="Gene3D" id="1.20.1130.10">
    <property type="entry name" value="Photosystem I PsaA/PsaB"/>
    <property type="match status" value="1"/>
</dbReference>
<dbReference type="HAMAP" id="MF_00482">
    <property type="entry name" value="PSI_PsaB"/>
    <property type="match status" value="1"/>
</dbReference>
<dbReference type="InterPro" id="IPR001280">
    <property type="entry name" value="PSI_PsaA/B"/>
</dbReference>
<dbReference type="InterPro" id="IPR020586">
    <property type="entry name" value="PSI_PsaA/B_CS"/>
</dbReference>
<dbReference type="InterPro" id="IPR036408">
    <property type="entry name" value="PSI_PsaA/B_sf"/>
</dbReference>
<dbReference type="InterPro" id="IPR006244">
    <property type="entry name" value="PSI_PsaB"/>
</dbReference>
<dbReference type="NCBIfam" id="TIGR01336">
    <property type="entry name" value="psaB"/>
    <property type="match status" value="1"/>
</dbReference>
<dbReference type="PANTHER" id="PTHR30128">
    <property type="entry name" value="OUTER MEMBRANE PROTEIN, OMPA-RELATED"/>
    <property type="match status" value="1"/>
</dbReference>
<dbReference type="PANTHER" id="PTHR30128:SF19">
    <property type="entry name" value="PHOTOSYSTEM I P700 CHLOROPHYLL A APOPROTEIN A1-RELATED"/>
    <property type="match status" value="1"/>
</dbReference>
<dbReference type="Pfam" id="PF00223">
    <property type="entry name" value="PsaA_PsaB"/>
    <property type="match status" value="1"/>
</dbReference>
<dbReference type="PIRSF" id="PIRSF002905">
    <property type="entry name" value="PSI_A"/>
    <property type="match status" value="1"/>
</dbReference>
<dbReference type="PRINTS" id="PR00257">
    <property type="entry name" value="PHOTSYSPSAAB"/>
</dbReference>
<dbReference type="SUPFAM" id="SSF81558">
    <property type="entry name" value="Photosystem I subunits PsaA/PsaB"/>
    <property type="match status" value="1"/>
</dbReference>
<dbReference type="PROSITE" id="PS00419">
    <property type="entry name" value="PHOTOSYSTEM_I_PSAAB"/>
    <property type="match status" value="1"/>
</dbReference>
<reference key="1">
    <citation type="journal article" date="1995" name="Plant Mol. Biol. Rep.">
        <title>Nucleotide sequence of the cyanelle DNA from Cyanophora paradoxa.</title>
        <authorList>
            <person name="Stirewalt V.L."/>
            <person name="Michalowski C.B."/>
            <person name="Loeffelhardt W."/>
            <person name="Bohnert H.J."/>
            <person name="Bryant D.A."/>
        </authorList>
    </citation>
    <scope>NUCLEOTIDE SEQUENCE [LARGE SCALE GENOMIC DNA]</scope>
    <source>
        <strain>UTEX LB 555 / Pringsheim</strain>
    </source>
</reference>
<reference key="2">
    <citation type="book" date="1997" name="Eukaryotism and symbiosis">
        <title>The complete sequence of the cyanelle genome of Cyanophora paradoxa: the genetic complexity of a primitive plastid.</title>
        <editorList>
            <person name="Schenk H.E.A."/>
            <person name="Herrmann R."/>
            <person name="Jeon K.W."/>
            <person name="Mueller N.E."/>
            <person name="Schwemmler W."/>
        </editorList>
        <authorList>
            <person name="Loeffelhardt W."/>
            <person name="Stirewalt V.L."/>
            <person name="Michalowski C.B."/>
            <person name="Annarella M."/>
            <person name="Farley J.Y."/>
            <person name="Schluchter W.M."/>
            <person name="Chung S."/>
            <person name="Newmann-Spallart C."/>
            <person name="Steiner J.M."/>
            <person name="Jakowitsch J."/>
            <person name="Bohnert H.J."/>
            <person name="Bryant D.A."/>
        </authorList>
    </citation>
    <scope>NUCLEOTIDE SEQUENCE [LARGE SCALE GENOMIC DNA]</scope>
    <source>
        <strain>UTEX LB 555 / Pringsheim</strain>
    </source>
</reference>
<accession>P48113</accession>
<evidence type="ECO:0000250" key="1"/>
<evidence type="ECO:0000255" key="2">
    <source>
        <dbReference type="HAMAP-Rule" id="MF_00482"/>
    </source>
</evidence>
<evidence type="ECO:0007829" key="3">
    <source>
        <dbReference type="PDB" id="7DR0"/>
    </source>
</evidence>
<evidence type="ECO:0007829" key="4">
    <source>
        <dbReference type="PDB" id="7DR1"/>
    </source>
</evidence>